<comment type="function">
    <text evidence="4">Key enzyme in the regulation of glycerol uptake and metabolism. Catalyzes the phosphorylation of glycerol to yield sn-glycerol 3-phosphate.</text>
</comment>
<comment type="catalytic activity">
    <reaction evidence="4">
        <text>glycerol + ATP = sn-glycerol 3-phosphate + ADP + H(+)</text>
        <dbReference type="Rhea" id="RHEA:21644"/>
        <dbReference type="ChEBI" id="CHEBI:15378"/>
        <dbReference type="ChEBI" id="CHEBI:17754"/>
        <dbReference type="ChEBI" id="CHEBI:30616"/>
        <dbReference type="ChEBI" id="CHEBI:57597"/>
        <dbReference type="ChEBI" id="CHEBI:456216"/>
        <dbReference type="EC" id="2.7.1.30"/>
    </reaction>
    <physiologicalReaction direction="left-to-right" evidence="4">
        <dbReference type="Rhea" id="RHEA:21645"/>
    </physiologicalReaction>
</comment>
<comment type="pathway">
    <text evidence="4">Polyol metabolism; glycerol degradation via glycerol kinase pathway; sn-glycerol 3-phosphate from glycerol: step 1/1.</text>
</comment>
<comment type="interaction">
    <interactant intactId="EBI-7694">
        <id>P32190</id>
    </interactant>
    <interactant intactId="EBI-7836">
        <id>P40106</id>
        <label>GPP2</label>
    </interactant>
    <organismsDiffer>false</organismsDiffer>
    <experiments>2</experiments>
</comment>
<comment type="similarity">
    <text evidence="3">Belongs to the FGGY kinase family.</text>
</comment>
<dbReference type="EC" id="2.7.1.30" evidence="4"/>
<dbReference type="EMBL" id="X69049">
    <property type="protein sequence ID" value="CAA48791.1"/>
    <property type="molecule type" value="Genomic_DNA"/>
</dbReference>
<dbReference type="EMBL" id="U11583">
    <property type="protein sequence ID" value="AAB65044.1"/>
    <property type="molecule type" value="Genomic_DNA"/>
</dbReference>
<dbReference type="EMBL" id="BK006934">
    <property type="protein sequence ID" value="DAA06653.1"/>
    <property type="molecule type" value="Genomic_DNA"/>
</dbReference>
<dbReference type="PIR" id="S33907">
    <property type="entry name" value="S33907"/>
</dbReference>
<dbReference type="RefSeq" id="NP_011831.1">
    <property type="nucleotide sequence ID" value="NM_001179112.1"/>
</dbReference>
<dbReference type="SMR" id="P32190"/>
<dbReference type="BioGRID" id="36390">
    <property type="interactions" value="56"/>
</dbReference>
<dbReference type="DIP" id="DIP-6761N"/>
<dbReference type="FunCoup" id="P32190">
    <property type="interactions" value="449"/>
</dbReference>
<dbReference type="IntAct" id="P32190">
    <property type="interactions" value="3"/>
</dbReference>
<dbReference type="MINT" id="P32190"/>
<dbReference type="STRING" id="4932.YHL032C"/>
<dbReference type="GlyGen" id="P32190">
    <property type="glycosylation" value="1 site, 1 O-linked glycan (1 site)"/>
</dbReference>
<dbReference type="iPTMnet" id="P32190"/>
<dbReference type="PaxDb" id="4932-YHL032C"/>
<dbReference type="PeptideAtlas" id="P32190"/>
<dbReference type="EnsemblFungi" id="YHL032C_mRNA">
    <property type="protein sequence ID" value="YHL032C"/>
    <property type="gene ID" value="YHL032C"/>
</dbReference>
<dbReference type="GeneID" id="856353"/>
<dbReference type="KEGG" id="sce:YHL032C"/>
<dbReference type="AGR" id="SGD:S000001024"/>
<dbReference type="SGD" id="S000001024">
    <property type="gene designation" value="GUT1"/>
</dbReference>
<dbReference type="VEuPathDB" id="FungiDB:YHL032C"/>
<dbReference type="eggNOG" id="KOG2517">
    <property type="taxonomic scope" value="Eukaryota"/>
</dbReference>
<dbReference type="GeneTree" id="ENSGT01000000214434"/>
<dbReference type="HOGENOM" id="CLU_009281_2_2_1"/>
<dbReference type="InParanoid" id="P32190"/>
<dbReference type="OMA" id="FMLMNIG"/>
<dbReference type="OrthoDB" id="5422795at2759"/>
<dbReference type="BioCyc" id="YEAST:YHL032C-MONOMER"/>
<dbReference type="Reactome" id="R-SCE-75109">
    <property type="pathway name" value="Triglyceride biosynthesis"/>
</dbReference>
<dbReference type="UniPathway" id="UPA00618">
    <property type="reaction ID" value="UER00672"/>
</dbReference>
<dbReference type="BioGRID-ORCS" id="856353">
    <property type="hits" value="7 hits in 10 CRISPR screens"/>
</dbReference>
<dbReference type="PRO" id="PR:P32190"/>
<dbReference type="Proteomes" id="UP000002311">
    <property type="component" value="Chromosome VIII"/>
</dbReference>
<dbReference type="RNAct" id="P32190">
    <property type="molecule type" value="protein"/>
</dbReference>
<dbReference type="GO" id="GO:0005737">
    <property type="term" value="C:cytoplasm"/>
    <property type="evidence" value="ECO:0007005"/>
    <property type="project" value="SGD"/>
</dbReference>
<dbReference type="GO" id="GO:0005739">
    <property type="term" value="C:mitochondrion"/>
    <property type="evidence" value="ECO:0000314"/>
    <property type="project" value="SGD"/>
</dbReference>
<dbReference type="GO" id="GO:0005524">
    <property type="term" value="F:ATP binding"/>
    <property type="evidence" value="ECO:0007669"/>
    <property type="project" value="UniProtKB-KW"/>
</dbReference>
<dbReference type="GO" id="GO:0004370">
    <property type="term" value="F:glycerol kinase activity"/>
    <property type="evidence" value="ECO:0000315"/>
    <property type="project" value="SGD"/>
</dbReference>
<dbReference type="GO" id="GO:0019563">
    <property type="term" value="P:glycerol catabolic process"/>
    <property type="evidence" value="ECO:0007669"/>
    <property type="project" value="UniProtKB-UniPathway"/>
</dbReference>
<dbReference type="GO" id="GO:0006071">
    <property type="term" value="P:glycerol metabolic process"/>
    <property type="evidence" value="ECO:0000315"/>
    <property type="project" value="SGD"/>
</dbReference>
<dbReference type="GO" id="GO:0046167">
    <property type="term" value="P:glycerol-3-phosphate biosynthetic process"/>
    <property type="evidence" value="ECO:0000318"/>
    <property type="project" value="GO_Central"/>
</dbReference>
<dbReference type="GO" id="GO:0006641">
    <property type="term" value="P:triglyceride metabolic process"/>
    <property type="evidence" value="ECO:0000318"/>
    <property type="project" value="GO_Central"/>
</dbReference>
<dbReference type="CDD" id="cd07792">
    <property type="entry name" value="ASKHA_NBD_FGGY_GK1-3-like"/>
    <property type="match status" value="1"/>
</dbReference>
<dbReference type="FunFam" id="3.30.420.40:FF:000086">
    <property type="entry name" value="Glycerol kinase"/>
    <property type="match status" value="1"/>
</dbReference>
<dbReference type="FunFam" id="3.30.420.40:FF:000108">
    <property type="entry name" value="Glycerol kinase, glycosomal"/>
    <property type="match status" value="1"/>
</dbReference>
<dbReference type="Gene3D" id="3.30.420.40">
    <property type="match status" value="2"/>
</dbReference>
<dbReference type="InterPro" id="IPR043129">
    <property type="entry name" value="ATPase_NBD"/>
</dbReference>
<dbReference type="InterPro" id="IPR018483">
    <property type="entry name" value="Carb_kinase_FGGY_CS"/>
</dbReference>
<dbReference type="InterPro" id="IPR018485">
    <property type="entry name" value="FGGY_C"/>
</dbReference>
<dbReference type="InterPro" id="IPR018484">
    <property type="entry name" value="FGGY_N"/>
</dbReference>
<dbReference type="InterPro" id="IPR042018">
    <property type="entry name" value="GK1-3_metazoan-type"/>
</dbReference>
<dbReference type="InterPro" id="IPR005999">
    <property type="entry name" value="Glycerol_kin"/>
</dbReference>
<dbReference type="NCBIfam" id="TIGR01311">
    <property type="entry name" value="glycerol_kin"/>
    <property type="match status" value="1"/>
</dbReference>
<dbReference type="PANTHER" id="PTHR10196:SF69">
    <property type="entry name" value="GLYCEROL KINASE"/>
    <property type="match status" value="1"/>
</dbReference>
<dbReference type="PANTHER" id="PTHR10196">
    <property type="entry name" value="SUGAR KINASE"/>
    <property type="match status" value="1"/>
</dbReference>
<dbReference type="Pfam" id="PF02782">
    <property type="entry name" value="FGGY_C"/>
    <property type="match status" value="1"/>
</dbReference>
<dbReference type="Pfam" id="PF00370">
    <property type="entry name" value="FGGY_N"/>
    <property type="match status" value="1"/>
</dbReference>
<dbReference type="SUPFAM" id="SSF53067">
    <property type="entry name" value="Actin-like ATPase domain"/>
    <property type="match status" value="2"/>
</dbReference>
<dbReference type="PROSITE" id="PS00933">
    <property type="entry name" value="FGGY_KINASES_1"/>
    <property type="match status" value="1"/>
</dbReference>
<dbReference type="PROSITE" id="PS00445">
    <property type="entry name" value="FGGY_KINASES_2"/>
    <property type="match status" value="1"/>
</dbReference>
<evidence type="ECO:0000250" key="1"/>
<evidence type="ECO:0000256" key="2">
    <source>
        <dbReference type="SAM" id="MobiDB-lite"/>
    </source>
</evidence>
<evidence type="ECO:0000305" key="3"/>
<evidence type="ECO:0000305" key="4">
    <source>
    </source>
</evidence>
<accession>P32190</accession>
<accession>D3DKT6</accession>
<reference key="1">
    <citation type="journal article" date="1993" name="Curr. Genet.">
        <title>The glycerol kinase (GUT1) gene of Saccharomyces cerevisiae: cloning and characterization.</title>
        <authorList>
            <person name="Pavlik P."/>
            <person name="Simon M."/>
            <person name="Schuster T."/>
            <person name="Ruis H."/>
        </authorList>
    </citation>
    <scope>NUCLEOTIDE SEQUENCE [GENOMIC DNA]</scope>
    <scope>FUNCTION</scope>
    <scope>CATALYTIC ACTIVITY</scope>
    <source>
        <strain>ATCC 204511 / S288c / AB972</strain>
    </source>
</reference>
<reference key="2">
    <citation type="journal article" date="1994" name="Science">
        <title>Complete nucleotide sequence of Saccharomyces cerevisiae chromosome VIII.</title>
        <authorList>
            <person name="Johnston M."/>
            <person name="Andrews S."/>
            <person name="Brinkman R."/>
            <person name="Cooper J."/>
            <person name="Ding H."/>
            <person name="Dover J."/>
            <person name="Du Z."/>
            <person name="Favello A."/>
            <person name="Fulton L."/>
            <person name="Gattung S."/>
            <person name="Geisel C."/>
            <person name="Kirsten J."/>
            <person name="Kucaba T."/>
            <person name="Hillier L.W."/>
            <person name="Jier M."/>
            <person name="Johnston L."/>
            <person name="Langston Y."/>
            <person name="Latreille P."/>
            <person name="Louis E.J."/>
            <person name="Macri C."/>
            <person name="Mardis E."/>
            <person name="Menezes S."/>
            <person name="Mouser L."/>
            <person name="Nhan M."/>
            <person name="Rifkin L."/>
            <person name="Riles L."/>
            <person name="St Peter H."/>
            <person name="Trevaskis E."/>
            <person name="Vaughan K."/>
            <person name="Vignati D."/>
            <person name="Wilcox L."/>
            <person name="Wohldman P."/>
            <person name="Waterston R."/>
            <person name="Wilson R."/>
            <person name="Vaudin M."/>
        </authorList>
    </citation>
    <scope>NUCLEOTIDE SEQUENCE [LARGE SCALE GENOMIC DNA]</scope>
    <source>
        <strain>ATCC 204508 / S288c</strain>
    </source>
</reference>
<reference key="3">
    <citation type="journal article" date="2014" name="G3 (Bethesda)">
        <title>The reference genome sequence of Saccharomyces cerevisiae: Then and now.</title>
        <authorList>
            <person name="Engel S.R."/>
            <person name="Dietrich F.S."/>
            <person name="Fisk D.G."/>
            <person name="Binkley G."/>
            <person name="Balakrishnan R."/>
            <person name="Costanzo M.C."/>
            <person name="Dwight S.S."/>
            <person name="Hitz B.C."/>
            <person name="Karra K."/>
            <person name="Nash R.S."/>
            <person name="Weng S."/>
            <person name="Wong E.D."/>
            <person name="Lloyd P."/>
            <person name="Skrzypek M.S."/>
            <person name="Miyasato S.R."/>
            <person name="Simison M."/>
            <person name="Cherry J.M."/>
        </authorList>
    </citation>
    <scope>GENOME REANNOTATION</scope>
    <source>
        <strain>ATCC 204508 / S288c</strain>
    </source>
</reference>
<gene>
    <name type="primary">GUT1</name>
    <name type="ordered locus">YHL032C</name>
</gene>
<organism>
    <name type="scientific">Saccharomyces cerevisiae (strain ATCC 204508 / S288c)</name>
    <name type="common">Baker's yeast</name>
    <dbReference type="NCBI Taxonomy" id="559292"/>
    <lineage>
        <taxon>Eukaryota</taxon>
        <taxon>Fungi</taxon>
        <taxon>Dikarya</taxon>
        <taxon>Ascomycota</taxon>
        <taxon>Saccharomycotina</taxon>
        <taxon>Saccharomycetes</taxon>
        <taxon>Saccharomycetales</taxon>
        <taxon>Saccharomycetaceae</taxon>
        <taxon>Saccharomyces</taxon>
    </lineage>
</organism>
<sequence length="709" mass="79824">MFPSLFRLVVFSKRYIFRSSQRLYTSLKQEQSRMSKIMEDLRSDYVPLIASIDVGTTSSRCILFNRWGQDVSKHQIEYSTSASKGKIGVSGLRRPSTAPARETPNAGDIKTSGKPIFSAEGYAIQETKFLKIEELDLDFHNEPTLKFPKPGWVECHPQKLLVNVVQCLASSLLSLQTINSERVANGLPPYKVICMGIANMRETTILWSRRTGKPIVNYGIVWNDTRTIKIVRDKWQNTSVDRQLQLRQKTGLPLLSTYFSCSKLRWFLDNEPLCTKAYEENDLMFGTVDTWLIYQLTKQKAFVSDVTNASRTGFMNLSTLKYDNELLEFWGIDKNLIHMPEIVSSSQYYGDFGIPDWIMEKLHDSPKTVLRDLVKRNLPIQGCLGDQSASMVGQLAYKPGAAKCTYGTGCFLLYNTGTKKLISQHGALTTLAFWFPHLQEYGGQKPELSKPHFALEGSVAVAGAVVQWLRDNLRLIDKSEDVGPIASTVPDSGGVVFVPAFSGLFAPYWDPDARATIMGMSQFTTASHIARAAVEGVCFQARAILKAMSSDAFGEGSKDRDFLEEISDVTYEKSPLSVLAVDGGMSRSNEVMQIQADILGPCVKVRRSPTAECTALGAAIAANMAFKDVNERPLWKDLHDVKKWVFYNGMEKNEQISPEAHPNLKIFRSESDDAERRKHWKYWEVAVERSKGWLKDIEGEHEQVLENFQ</sequence>
<feature type="chain" id="PRO_0000059542" description="Glycerol kinase">
    <location>
        <begin position="1"/>
        <end position="709"/>
    </location>
</feature>
<feature type="region of interest" description="Disordered" evidence="2">
    <location>
        <begin position="86"/>
        <end position="110"/>
    </location>
</feature>
<feature type="binding site" evidence="1">
    <location>
        <position position="56"/>
    </location>
    <ligand>
        <name>substrate</name>
    </ligand>
</feature>
<feature type="binding site" evidence="1">
    <location>
        <position position="60"/>
    </location>
    <ligand>
        <name>ATP</name>
        <dbReference type="ChEBI" id="CHEBI:30616"/>
    </ligand>
</feature>
<feature type="binding site" evidence="1">
    <location>
        <position position="201"/>
    </location>
    <ligand>
        <name>substrate</name>
    </ligand>
</feature>
<feature type="binding site" evidence="1">
    <location>
        <position position="258"/>
    </location>
    <ligand>
        <name>substrate</name>
    </ligand>
</feature>
<feature type="binding site" evidence="1">
    <location>
        <position position="386"/>
    </location>
    <ligand>
        <name>substrate</name>
    </ligand>
</feature>
<feature type="binding site" evidence="1">
    <location>
        <position position="408"/>
    </location>
    <ligand>
        <name>ATP</name>
        <dbReference type="ChEBI" id="CHEBI:30616"/>
    </ligand>
</feature>
<feature type="binding site" evidence="1">
    <location>
        <position position="463"/>
    </location>
    <ligand>
        <name>ATP</name>
        <dbReference type="ChEBI" id="CHEBI:30616"/>
    </ligand>
</feature>
<feature type="binding site" evidence="1">
    <location>
        <begin position="584"/>
        <end position="588"/>
    </location>
    <ligand>
        <name>ATP</name>
        <dbReference type="ChEBI" id="CHEBI:30616"/>
    </ligand>
</feature>
<proteinExistence type="evidence at protein level"/>
<protein>
    <recommendedName>
        <fullName>Glycerol kinase</fullName>
        <shortName>GK</shortName>
        <shortName>Glycerokinase</shortName>
        <ecNumber evidence="4">2.7.1.30</ecNumber>
    </recommendedName>
    <alternativeName>
        <fullName>ATP:glycerol 3-phosphotransferase</fullName>
    </alternativeName>
</protein>
<keyword id="KW-0067">ATP-binding</keyword>
<keyword id="KW-0319">Glycerol metabolism</keyword>
<keyword id="KW-0418">Kinase</keyword>
<keyword id="KW-0547">Nucleotide-binding</keyword>
<keyword id="KW-1185">Reference proteome</keyword>
<keyword id="KW-0808">Transferase</keyword>
<name>GLPK_YEAST</name>